<protein>
    <recommendedName>
        <fullName>Monomethylamine corrinoid protein 2</fullName>
        <shortName>MMCP 2</shortName>
    </recommendedName>
</protein>
<sequence>MTNTEIFDKLRDAIVNQDVAGTPELCKEALALGIPALDIITKGLSVGMKIVGDKFEAAEIFLPQIMMSGKAMSNAMEVLTPELEKNKKEGDEAGLAITFVAEGDIHDIGHRLVTTMLGANGFQIFDLGVDVLNETVVEEAAKHKGEKVLLVGSALMTTSMLGQKDLMDRLKEQKLRDSVKCMFGGAPVSDKWIEEIGADATAENAAEAAKVALEVMK</sequence>
<evidence type="ECO:0000250" key="1"/>
<evidence type="ECO:0000255" key="2">
    <source>
        <dbReference type="PROSITE-ProRule" id="PRU00666"/>
    </source>
</evidence>
<evidence type="ECO:0000255" key="3">
    <source>
        <dbReference type="PROSITE-ProRule" id="PRU00667"/>
    </source>
</evidence>
<evidence type="ECO:0000305" key="4"/>
<gene>
    <name type="primary">mtmC2</name>
</gene>
<reference key="1">
    <citation type="submission" date="2000-02" db="EMBL/GenBank/DDBJ databases">
        <title>Expression of two nearly identical copies of genes for monomethylamine methyltransferase and their cognate corrinoid proteins in Methanosarcina barkeri.</title>
        <authorList>
            <person name="Srinivasan G."/>
            <person name="Burke S.A."/>
            <person name="Lo S.L."/>
            <person name="Krzycki J.A."/>
        </authorList>
    </citation>
    <scope>NUCLEOTIDE SEQUENCE [GENOMIC DNA]</scope>
    <source>
        <strain>ATCC 43569 / MS / DSM 800 / JCM 10043 / NBRC 100474</strain>
    </source>
</reference>
<dbReference type="EMBL" id="AF230870">
    <property type="protein sequence ID" value="AAF68951.1"/>
    <property type="molecule type" value="Genomic_DNA"/>
</dbReference>
<dbReference type="SMR" id="Q9P9L5"/>
<dbReference type="UniPathway" id="UPA00643"/>
<dbReference type="GO" id="GO:0005829">
    <property type="term" value="C:cytosol"/>
    <property type="evidence" value="ECO:0007669"/>
    <property type="project" value="TreeGrafter"/>
</dbReference>
<dbReference type="GO" id="GO:0031419">
    <property type="term" value="F:cobalamin binding"/>
    <property type="evidence" value="ECO:0007669"/>
    <property type="project" value="InterPro"/>
</dbReference>
<dbReference type="GO" id="GO:0050897">
    <property type="term" value="F:cobalt ion binding"/>
    <property type="evidence" value="ECO:0007669"/>
    <property type="project" value="InterPro"/>
</dbReference>
<dbReference type="GO" id="GO:0008705">
    <property type="term" value="F:methionine synthase activity"/>
    <property type="evidence" value="ECO:0007669"/>
    <property type="project" value="TreeGrafter"/>
</dbReference>
<dbReference type="GO" id="GO:0050667">
    <property type="term" value="P:homocysteine metabolic process"/>
    <property type="evidence" value="ECO:0007669"/>
    <property type="project" value="TreeGrafter"/>
</dbReference>
<dbReference type="GO" id="GO:0015948">
    <property type="term" value="P:methanogenesis"/>
    <property type="evidence" value="ECO:0007669"/>
    <property type="project" value="UniProtKB-KW"/>
</dbReference>
<dbReference type="GO" id="GO:0046653">
    <property type="term" value="P:tetrahydrofolate metabolic process"/>
    <property type="evidence" value="ECO:0007669"/>
    <property type="project" value="TreeGrafter"/>
</dbReference>
<dbReference type="CDD" id="cd02070">
    <property type="entry name" value="corrinoid_protein_B12-BD"/>
    <property type="match status" value="1"/>
</dbReference>
<dbReference type="FunFam" id="3.40.50.280:FF:000007">
    <property type="entry name" value="Monomethylamine corrinoid protein 1"/>
    <property type="match status" value="1"/>
</dbReference>
<dbReference type="FunFam" id="1.10.1240.10:FF:000004">
    <property type="entry name" value="Monomethylamine methyltransferase corrinoid protein"/>
    <property type="match status" value="1"/>
</dbReference>
<dbReference type="Gene3D" id="3.40.50.280">
    <property type="entry name" value="Cobalamin-binding domain"/>
    <property type="match status" value="1"/>
</dbReference>
<dbReference type="Gene3D" id="1.10.1240.10">
    <property type="entry name" value="Methionine synthase domain"/>
    <property type="match status" value="1"/>
</dbReference>
<dbReference type="InterPro" id="IPR003759">
    <property type="entry name" value="Cbl-bd_cap"/>
</dbReference>
<dbReference type="InterPro" id="IPR006158">
    <property type="entry name" value="Cobalamin-bd"/>
</dbReference>
<dbReference type="InterPro" id="IPR036724">
    <property type="entry name" value="Cobalamin-bd_sf"/>
</dbReference>
<dbReference type="InterPro" id="IPR012741">
    <property type="entry name" value="Corrinoid_p"/>
</dbReference>
<dbReference type="InterPro" id="IPR050554">
    <property type="entry name" value="Met_Synthase/Corrinoid"/>
</dbReference>
<dbReference type="InterPro" id="IPR036594">
    <property type="entry name" value="Meth_synthase_dom"/>
</dbReference>
<dbReference type="NCBIfam" id="TIGR02370">
    <property type="entry name" value="pyl_corrinoid"/>
    <property type="match status" value="1"/>
</dbReference>
<dbReference type="PANTHER" id="PTHR45833">
    <property type="entry name" value="METHIONINE SYNTHASE"/>
    <property type="match status" value="1"/>
</dbReference>
<dbReference type="PANTHER" id="PTHR45833:SF1">
    <property type="entry name" value="METHIONINE SYNTHASE"/>
    <property type="match status" value="1"/>
</dbReference>
<dbReference type="Pfam" id="PF02310">
    <property type="entry name" value="B12-binding"/>
    <property type="match status" value="1"/>
</dbReference>
<dbReference type="Pfam" id="PF02607">
    <property type="entry name" value="B12-binding_2"/>
    <property type="match status" value="1"/>
</dbReference>
<dbReference type="SMART" id="SM01018">
    <property type="entry name" value="B12-binding_2"/>
    <property type="match status" value="1"/>
</dbReference>
<dbReference type="SUPFAM" id="SSF52242">
    <property type="entry name" value="Cobalamin (vitamin B12)-binding domain"/>
    <property type="match status" value="1"/>
</dbReference>
<dbReference type="SUPFAM" id="SSF47644">
    <property type="entry name" value="Methionine synthase domain"/>
    <property type="match status" value="1"/>
</dbReference>
<dbReference type="PROSITE" id="PS51332">
    <property type="entry name" value="B12_BINDING"/>
    <property type="match status" value="1"/>
</dbReference>
<dbReference type="PROSITE" id="PS51337">
    <property type="entry name" value="B12_BINDING_NTER"/>
    <property type="match status" value="1"/>
</dbReference>
<accession>Q9P9L5</accession>
<comment type="function">
    <text evidence="1">Acts as a methyl group carrier between MtmB and MtbA.</text>
</comment>
<comment type="pathway">
    <text>One-carbon metabolism; methanogenesis from methylamine.</text>
</comment>
<comment type="subunit">
    <text evidence="1">Can form a complex with MtmB.</text>
</comment>
<comment type="similarity">
    <text evidence="4">Belongs to the methylamine corrinoid protein family.</text>
</comment>
<proteinExistence type="inferred from homology"/>
<keyword id="KW-0170">Cobalt</keyword>
<keyword id="KW-0479">Metal-binding</keyword>
<keyword id="KW-0484">Methanogenesis</keyword>
<keyword id="KW-0677">Repeat</keyword>
<feature type="chain" id="PRO_0000216468" description="Monomethylamine corrinoid protein 2">
    <location>
        <begin position="1"/>
        <end position="217"/>
    </location>
</feature>
<feature type="domain" description="B12-binding N-terminal" evidence="3">
    <location>
        <begin position="1"/>
        <end position="91"/>
    </location>
</feature>
<feature type="domain" description="B12-binding" evidence="2">
    <location>
        <begin position="93"/>
        <end position="217"/>
    </location>
</feature>
<feature type="binding site" description="axial binding residue" evidence="1">
    <location>
        <position position="106"/>
    </location>
    <ligand>
        <name>methylcob(III)alamin</name>
        <dbReference type="ChEBI" id="CHEBI:28115"/>
    </ligand>
    <ligandPart>
        <name>Co</name>
        <dbReference type="ChEBI" id="CHEBI:27638"/>
    </ligandPart>
</feature>
<name>MTMC2_METBA</name>
<organism>
    <name type="scientific">Methanosarcina barkeri</name>
    <dbReference type="NCBI Taxonomy" id="2208"/>
    <lineage>
        <taxon>Archaea</taxon>
        <taxon>Methanobacteriati</taxon>
        <taxon>Methanobacteriota</taxon>
        <taxon>Stenosarchaea group</taxon>
        <taxon>Methanomicrobia</taxon>
        <taxon>Methanosarcinales</taxon>
        <taxon>Methanosarcinaceae</taxon>
        <taxon>Methanosarcina</taxon>
    </lineage>
</organism>